<protein>
    <recommendedName>
        <fullName>Tripartite motif-containing protein 5</fullName>
        <ecNumber>2.3.2.27</ecNumber>
    </recommendedName>
    <alternativeName>
        <fullName evidence="8">RING-type E3 ubiquitin transferase TRIM5</fullName>
    </alternativeName>
    <alternativeName>
        <fullName>TRIM5alpha</fullName>
    </alternativeName>
</protein>
<feature type="initiator methionine" description="Removed" evidence="3">
    <location>
        <position position="1"/>
    </location>
</feature>
<feature type="chain" id="PRO_0000273467" description="Tripartite motif-containing protein 5">
    <location>
        <begin position="2"/>
        <end position="493"/>
    </location>
</feature>
<feature type="domain" description="B30.2/SPRY" evidence="7">
    <location>
        <begin position="281"/>
        <end position="493"/>
    </location>
</feature>
<feature type="zinc finger region" description="RING-type" evidence="6">
    <location>
        <begin position="15"/>
        <end position="59"/>
    </location>
</feature>
<feature type="zinc finger region" description="B box-type" evidence="5">
    <location>
        <begin position="90"/>
        <end position="132"/>
    </location>
</feature>
<feature type="region of interest" description="Required for interaction with GABARAP and for autophagy" evidence="2">
    <location>
        <begin position="185"/>
        <end position="198"/>
    </location>
</feature>
<feature type="coiled-coil region" evidence="4">
    <location>
        <begin position="131"/>
        <end position="240"/>
    </location>
</feature>
<feature type="binding site" evidence="5">
    <location>
        <position position="95"/>
    </location>
    <ligand>
        <name>Zn(2+)</name>
        <dbReference type="ChEBI" id="CHEBI:29105"/>
    </ligand>
</feature>
<feature type="binding site" evidence="5">
    <location>
        <position position="98"/>
    </location>
    <ligand>
        <name>Zn(2+)</name>
        <dbReference type="ChEBI" id="CHEBI:29105"/>
    </ligand>
</feature>
<feature type="binding site" evidence="5">
    <location>
        <position position="117"/>
    </location>
    <ligand>
        <name>Zn(2+)</name>
        <dbReference type="ChEBI" id="CHEBI:29105"/>
    </ligand>
</feature>
<feature type="binding site" evidence="5">
    <location>
        <position position="123"/>
    </location>
    <ligand>
        <name>Zn(2+)</name>
        <dbReference type="ChEBI" id="CHEBI:29105"/>
    </ligand>
</feature>
<feature type="modified residue" description="N-acetylalanine" evidence="3">
    <location>
        <position position="2"/>
    </location>
</feature>
<feature type="modified residue" description="Phosphoserine" evidence="3">
    <location>
        <position position="86"/>
    </location>
</feature>
<reference key="1">
    <citation type="journal article" date="2006" name="Retrovirology">
        <title>Patterns of evolution of host proteins involved in retroviral pathogenesis.</title>
        <authorList>
            <person name="Ortiz M."/>
            <person name="Bleiber G."/>
            <person name="Martinez R."/>
            <person name="Kaessmann H."/>
            <person name="Telenti A."/>
        </authorList>
    </citation>
    <scope>NUCLEOTIDE SEQUENCE [GENOMIC DNA]</scope>
</reference>
<keyword id="KW-0007">Acetylation</keyword>
<keyword id="KW-0051">Antiviral defense</keyword>
<keyword id="KW-0072">Autophagy</keyword>
<keyword id="KW-0175">Coiled coil</keyword>
<keyword id="KW-0963">Cytoplasm</keyword>
<keyword id="KW-0391">Immunity</keyword>
<keyword id="KW-0399">Innate immunity</keyword>
<keyword id="KW-0479">Metal-binding</keyword>
<keyword id="KW-0539">Nucleus</keyword>
<keyword id="KW-0597">Phosphoprotein</keyword>
<keyword id="KW-1185">Reference proteome</keyword>
<keyword id="KW-0808">Transferase</keyword>
<keyword id="KW-0832">Ubl conjugation</keyword>
<keyword id="KW-0833">Ubl conjugation pathway</keyword>
<keyword id="KW-0862">Zinc</keyword>
<keyword id="KW-0863">Zinc-finger</keyword>
<comment type="function">
    <text evidence="3">Capsid-specific restriction factor that prevents infection from non-host-adapted retroviruses. Blocks viral replication early in the life cycle, after viral entry but before reverse transcription. In addition to acting as a capsid-specific restriction factor, also acts as a pattern recognition receptor that activates innate immune signaling in response to the retroviral capsid lattice. Binding to the viral capsid triggers its E3 ubiquitin ligase activity, and in concert with the heterodimeric ubiquitin conjugating enzyme complex UBE2V1-UBE2N (also known as UBC13-UEV1A complex) generates 'Lys-63'-linked polyubiquitin chains, which in turn are catalysts in the autophosphorylation of the MAP3K7/TAK1 complex (includes TAK1, TAB2, and TAB3). Activation of the MAP3K7/TAK1 complex by autophosphorylation results in the induction and expression of NF-kappa-B and MAPK-responsive inflammatory genes, thereby leading to an innate immune response in the infected cell. Plays a role in regulating autophagy through activation of autophagy regulator BECN1 by causing its dissociation from its inhibitors BCL2 and TAB2.</text>
</comment>
<comment type="catalytic activity">
    <reaction>
        <text>S-ubiquitinyl-[E2 ubiquitin-conjugating enzyme]-L-cysteine + [acceptor protein]-L-lysine = [E2 ubiquitin-conjugating enzyme]-L-cysteine + N(6)-ubiquitinyl-[acceptor protein]-L-lysine.</text>
        <dbReference type="EC" id="2.3.2.27"/>
    </reaction>
</comment>
<comment type="pathway">
    <text>Protein modification; protein ubiquitination.</text>
</comment>
<comment type="subunit">
    <text evidence="2 3">Can form homodimers and homotrimers. In addition to lower-order dimerization, also exhibits a higher-order multimerization and both low- and high-order multimerizations are essential for its restriction activity. Interacts with BTBD1 and BTBD2. Interacts with PSMC4, PSMC5, PSMD7 and HSPA8/HSC70. Interacts (via B30.2/SPRY domain) with HSPA1A/B. Interacts with PSMC2, MAP3K7/TAK1, TAB2 and TAB3. Interacts with SQSTM1. Interacts with TRIM6 and TRIM34. Interacts with ULK1 (phosphorylated form), GABARAP, GABARAPL1, GABARAPL2, MAP1LC3A, MAP1LC3C and BECN1.</text>
</comment>
<comment type="subcellular location">
    <subcellularLocation>
        <location evidence="2">Cytoplasm</location>
    </subcellularLocation>
    <subcellularLocation>
        <location evidence="2">Nucleus</location>
    </subcellularLocation>
    <text evidence="2">Predominantly localizes in cytoplasmic bodies. Localization may be influenced by the coexpression of other TRIM proteins, hence partial nuclear localization is observed in the presence of TRIM22 or TRIM27. In cytoplasmic bodies, colocalizes with proteasomal subunits and SQSTM1.</text>
</comment>
<comment type="domain">
    <text evidence="2 3">The B box-type zinc finger domain and the coiled-coil domain contribute to the higher and low order multimerization respectively which is essential for restriction activity. The coiled coil domain is important for higher order multimerization by promoting the initial dimerization.</text>
</comment>
<comment type="domain">
    <text evidence="1">The B30.2/SPRY domain acts as a capsid recognition domain. Polymorphisms in this domain explain the observed species-specific differences among orthologs (By similarity).</text>
</comment>
<comment type="domain">
    <text evidence="1">The RING-type zinc finger domain confers E3 ubiquitin ligase activity and is essential for retrovirus restriction activity, autoubiquitination and higher-order multimerization.</text>
</comment>
<comment type="PTM">
    <text evidence="1">Degraded in a proteasome-independent fashion in the absence of viral infection but in a proteasome-dependent fashion following exposure to restriction sensitive virus.</text>
</comment>
<comment type="PTM">
    <text evidence="1">Autoubiquitinated in a RING finger- and UBE2D2-dependent manner. Monoubiquitinated by TRIM21. Deubiquitinated by Yersinia YopJ. Ubiquitination may not lead to proteasomal degradation (By similarity).</text>
</comment>
<comment type="similarity">
    <text evidence="8">Belongs to the TRIM/RBCC family.</text>
</comment>
<gene>
    <name type="primary">TRIM5</name>
</gene>
<organism>
    <name type="scientific">Pan paniscus</name>
    <name type="common">Pygmy chimpanzee</name>
    <name type="synonym">Bonobo</name>
    <dbReference type="NCBI Taxonomy" id="9597"/>
    <lineage>
        <taxon>Eukaryota</taxon>
        <taxon>Metazoa</taxon>
        <taxon>Chordata</taxon>
        <taxon>Craniata</taxon>
        <taxon>Vertebrata</taxon>
        <taxon>Euteleostomi</taxon>
        <taxon>Mammalia</taxon>
        <taxon>Eutheria</taxon>
        <taxon>Euarchontoglires</taxon>
        <taxon>Primates</taxon>
        <taxon>Haplorrhini</taxon>
        <taxon>Catarrhini</taxon>
        <taxon>Hominidae</taxon>
        <taxon>Pan</taxon>
    </lineage>
</organism>
<sequence length="493" mass="56350">MASGILVNVKEEVTCPICLELLTQPLSLDCGHSFCQACLTANHKKSMLDKGESSCPVCRISYQPENIRPNRHVANIVEKLREVKLSPEGQKVDHCARHGEKLLLFCQEDGKVICWLCERSQEHRGHHTFLTEEVAREYQVKLQAALEMLRQKQQEAEELEADIREEKASWKTQIQYDKTNVLADFEQLRDILDWEESNELQNLEKEEEDILKSLTKSETEMVQQTQSVRELISDLERRLQGSVMELLQGVDGVIKRMENVTLKKPETFPKNQRRVFRAPDLKGMLEVFRELTDVRRYWVDVTVAPNNISCAVISEDMRQVSSPKPQIIYGARGTRYQTFMNFNYCTGILGSQSITSGKHYWEVDVSKKSAWILGVCAGFQPDAMCNIEKNENYQPKYGYWVIGLEEGVKCSAFQDGSFHTPSAPFIVPLSVIICPDRVGVFLDYEACTVSFFNITNHGFLIYKFSHCSFSQPVFPYLNPRKCGVPMTLCSPSS</sequence>
<dbReference type="EC" id="2.3.2.27"/>
<dbReference type="EMBL" id="DQ229282">
    <property type="protein sequence ID" value="ABC33738.1"/>
    <property type="molecule type" value="Genomic_DNA"/>
</dbReference>
<dbReference type="BMRB" id="Q1ACD8"/>
<dbReference type="SMR" id="Q1ACD8"/>
<dbReference type="STRING" id="9597.ENSPPAP00000033117"/>
<dbReference type="eggNOG" id="KOG2177">
    <property type="taxonomic scope" value="Eukaryota"/>
</dbReference>
<dbReference type="UniPathway" id="UPA00143"/>
<dbReference type="Proteomes" id="UP000240080">
    <property type="component" value="Unplaced"/>
</dbReference>
<dbReference type="GO" id="GO:0005634">
    <property type="term" value="C:nucleus"/>
    <property type="evidence" value="ECO:0007669"/>
    <property type="project" value="UniProtKB-SubCell"/>
</dbReference>
<dbReference type="GO" id="GO:0000932">
    <property type="term" value="C:P-body"/>
    <property type="evidence" value="ECO:0000250"/>
    <property type="project" value="UniProtKB"/>
</dbReference>
<dbReference type="GO" id="GO:0038187">
    <property type="term" value="F:pattern recognition receptor activity"/>
    <property type="evidence" value="ECO:0000250"/>
    <property type="project" value="UniProtKB"/>
</dbReference>
<dbReference type="GO" id="GO:0004842">
    <property type="term" value="F:ubiquitin-protein transferase activity"/>
    <property type="evidence" value="ECO:0000250"/>
    <property type="project" value="UniProtKB"/>
</dbReference>
<dbReference type="GO" id="GO:0008270">
    <property type="term" value="F:zinc ion binding"/>
    <property type="evidence" value="ECO:0007669"/>
    <property type="project" value="UniProtKB-KW"/>
</dbReference>
<dbReference type="GO" id="GO:0002218">
    <property type="term" value="P:activation of innate immune response"/>
    <property type="evidence" value="ECO:0000250"/>
    <property type="project" value="UniProtKB"/>
</dbReference>
<dbReference type="GO" id="GO:0006914">
    <property type="term" value="P:autophagy"/>
    <property type="evidence" value="ECO:0007669"/>
    <property type="project" value="UniProtKB-KW"/>
</dbReference>
<dbReference type="GO" id="GO:0051607">
    <property type="term" value="P:defense response to virus"/>
    <property type="evidence" value="ECO:0007669"/>
    <property type="project" value="UniProtKB-KW"/>
</dbReference>
<dbReference type="GO" id="GO:0045087">
    <property type="term" value="P:innate immune response"/>
    <property type="evidence" value="ECO:0007669"/>
    <property type="project" value="UniProtKB-KW"/>
</dbReference>
<dbReference type="GO" id="GO:0043123">
    <property type="term" value="P:positive regulation of canonical NF-kappaB signal transduction"/>
    <property type="evidence" value="ECO:0000250"/>
    <property type="project" value="UniProtKB"/>
</dbReference>
<dbReference type="GO" id="GO:0043410">
    <property type="term" value="P:positive regulation of MAPK cascade"/>
    <property type="evidence" value="ECO:0000250"/>
    <property type="project" value="UniProtKB"/>
</dbReference>
<dbReference type="GO" id="GO:0051092">
    <property type="term" value="P:positive regulation of NF-kappaB transcription factor activity"/>
    <property type="evidence" value="ECO:0000250"/>
    <property type="project" value="UniProtKB"/>
</dbReference>
<dbReference type="GO" id="GO:0070534">
    <property type="term" value="P:protein K63-linked ubiquitination"/>
    <property type="evidence" value="ECO:0000250"/>
    <property type="project" value="UniProtKB"/>
</dbReference>
<dbReference type="GO" id="GO:0031664">
    <property type="term" value="P:regulation of lipopolysaccharide-mediated signaling pathway"/>
    <property type="evidence" value="ECO:0000250"/>
    <property type="project" value="UniProtKB"/>
</dbReference>
<dbReference type="CDD" id="cd19761">
    <property type="entry name" value="Bbox2_TRIM5-like"/>
    <property type="match status" value="1"/>
</dbReference>
<dbReference type="CDD" id="cd16591">
    <property type="entry name" value="RING-HC_TRIM5-like_C-IV"/>
    <property type="match status" value="1"/>
</dbReference>
<dbReference type="CDD" id="cd15822">
    <property type="entry name" value="SPRY_PRY_TRIM5"/>
    <property type="match status" value="1"/>
</dbReference>
<dbReference type="FunFam" id="2.60.120.920:FF:000023">
    <property type="entry name" value="Tripartite motif-containing 5 (Predicted)"/>
    <property type="match status" value="1"/>
</dbReference>
<dbReference type="FunFam" id="3.30.160.60:FF:000386">
    <property type="entry name" value="Tripartite motif-containing 5 (Predicted)"/>
    <property type="match status" value="1"/>
</dbReference>
<dbReference type="FunFam" id="3.30.40.10:FF:000144">
    <property type="entry name" value="Tripartite motif-containing 5 (Predicted)"/>
    <property type="match status" value="1"/>
</dbReference>
<dbReference type="Gene3D" id="2.60.120.920">
    <property type="match status" value="1"/>
</dbReference>
<dbReference type="Gene3D" id="3.30.160.60">
    <property type="entry name" value="Classic Zinc Finger"/>
    <property type="match status" value="1"/>
</dbReference>
<dbReference type="Gene3D" id="3.30.40.10">
    <property type="entry name" value="Zinc/RING finger domain, C3HC4 (zinc finger)"/>
    <property type="match status" value="1"/>
</dbReference>
<dbReference type="InterPro" id="IPR001870">
    <property type="entry name" value="B30.2/SPRY"/>
</dbReference>
<dbReference type="InterPro" id="IPR043136">
    <property type="entry name" value="B30.2/SPRY_sf"/>
</dbReference>
<dbReference type="InterPro" id="IPR003879">
    <property type="entry name" value="Butyrophylin_SPRY"/>
</dbReference>
<dbReference type="InterPro" id="IPR013320">
    <property type="entry name" value="ConA-like_dom_sf"/>
</dbReference>
<dbReference type="InterPro" id="IPR003877">
    <property type="entry name" value="SPRY_dom"/>
</dbReference>
<dbReference type="InterPro" id="IPR050143">
    <property type="entry name" value="TRIM/RBCC"/>
</dbReference>
<dbReference type="InterPro" id="IPR027370">
    <property type="entry name" value="Znf-RING_euk"/>
</dbReference>
<dbReference type="InterPro" id="IPR000315">
    <property type="entry name" value="Znf_B-box"/>
</dbReference>
<dbReference type="InterPro" id="IPR001841">
    <property type="entry name" value="Znf_RING"/>
</dbReference>
<dbReference type="InterPro" id="IPR013083">
    <property type="entry name" value="Znf_RING/FYVE/PHD"/>
</dbReference>
<dbReference type="InterPro" id="IPR017907">
    <property type="entry name" value="Znf_RING_CS"/>
</dbReference>
<dbReference type="PANTHER" id="PTHR24103">
    <property type="entry name" value="E3 UBIQUITIN-PROTEIN LIGASE TRIM"/>
    <property type="match status" value="1"/>
</dbReference>
<dbReference type="Pfam" id="PF00622">
    <property type="entry name" value="SPRY"/>
    <property type="match status" value="1"/>
</dbReference>
<dbReference type="Pfam" id="PF00643">
    <property type="entry name" value="zf-B_box"/>
    <property type="match status" value="1"/>
</dbReference>
<dbReference type="Pfam" id="PF13445">
    <property type="entry name" value="zf-RING_UBOX"/>
    <property type="match status" value="1"/>
</dbReference>
<dbReference type="PRINTS" id="PR01407">
    <property type="entry name" value="BUTYPHLNCDUF"/>
</dbReference>
<dbReference type="SMART" id="SM00336">
    <property type="entry name" value="BBOX"/>
    <property type="match status" value="1"/>
</dbReference>
<dbReference type="SMART" id="SM00184">
    <property type="entry name" value="RING"/>
    <property type="match status" value="1"/>
</dbReference>
<dbReference type="SMART" id="SM00449">
    <property type="entry name" value="SPRY"/>
    <property type="match status" value="1"/>
</dbReference>
<dbReference type="SUPFAM" id="SSF57845">
    <property type="entry name" value="B-box zinc-binding domain"/>
    <property type="match status" value="1"/>
</dbReference>
<dbReference type="SUPFAM" id="SSF49899">
    <property type="entry name" value="Concanavalin A-like lectins/glucanases"/>
    <property type="match status" value="1"/>
</dbReference>
<dbReference type="SUPFAM" id="SSF57850">
    <property type="entry name" value="RING/U-box"/>
    <property type="match status" value="1"/>
</dbReference>
<dbReference type="PROSITE" id="PS50188">
    <property type="entry name" value="B302_SPRY"/>
    <property type="match status" value="1"/>
</dbReference>
<dbReference type="PROSITE" id="PS50119">
    <property type="entry name" value="ZF_BBOX"/>
    <property type="match status" value="1"/>
</dbReference>
<dbReference type="PROSITE" id="PS00518">
    <property type="entry name" value="ZF_RING_1"/>
    <property type="match status" value="1"/>
</dbReference>
<dbReference type="PROSITE" id="PS50089">
    <property type="entry name" value="ZF_RING_2"/>
    <property type="match status" value="1"/>
</dbReference>
<evidence type="ECO:0000250" key="1"/>
<evidence type="ECO:0000250" key="2">
    <source>
        <dbReference type="UniProtKB" id="Q0PF16"/>
    </source>
</evidence>
<evidence type="ECO:0000250" key="3">
    <source>
        <dbReference type="UniProtKB" id="Q9C035"/>
    </source>
</evidence>
<evidence type="ECO:0000255" key="4"/>
<evidence type="ECO:0000255" key="5">
    <source>
        <dbReference type="PROSITE-ProRule" id="PRU00024"/>
    </source>
</evidence>
<evidence type="ECO:0000255" key="6">
    <source>
        <dbReference type="PROSITE-ProRule" id="PRU00175"/>
    </source>
</evidence>
<evidence type="ECO:0000255" key="7">
    <source>
        <dbReference type="PROSITE-ProRule" id="PRU00548"/>
    </source>
</evidence>
<evidence type="ECO:0000305" key="8"/>
<name>TRIM5_PANPA</name>
<accession>Q1ACD8</accession>
<proteinExistence type="inferred from homology"/>